<organism>
    <name type="scientific">Mycobacterium tuberculosis (strain CDC 1551 / Oshkosh)</name>
    <dbReference type="NCBI Taxonomy" id="83331"/>
    <lineage>
        <taxon>Bacteria</taxon>
        <taxon>Bacillati</taxon>
        <taxon>Actinomycetota</taxon>
        <taxon>Actinomycetes</taxon>
        <taxon>Mycobacteriales</taxon>
        <taxon>Mycobacteriaceae</taxon>
        <taxon>Mycobacterium</taxon>
        <taxon>Mycobacterium tuberculosis complex</taxon>
    </lineage>
</organism>
<comment type="function">
    <text evidence="1">Glycerophosphodiester phosphodiesterase hydrolyzes glycerophosphodiesters into glycerol-3-phosphate (G3P) and the corresponding alcohol.</text>
</comment>
<comment type="catalytic activity">
    <reaction evidence="1">
        <text>a sn-glycero-3-phosphodiester + H2O = an alcohol + sn-glycerol 3-phosphate + H(+)</text>
        <dbReference type="Rhea" id="RHEA:12969"/>
        <dbReference type="ChEBI" id="CHEBI:15377"/>
        <dbReference type="ChEBI" id="CHEBI:15378"/>
        <dbReference type="ChEBI" id="CHEBI:30879"/>
        <dbReference type="ChEBI" id="CHEBI:57597"/>
        <dbReference type="ChEBI" id="CHEBI:83408"/>
        <dbReference type="EC" id="3.1.4.46"/>
    </reaction>
</comment>
<comment type="cofactor">
    <cofactor evidence="1">
        <name>Ca(2+)</name>
        <dbReference type="ChEBI" id="CHEBI:29108"/>
    </cofactor>
    <text evidence="1">Binds 1 Ca(2+) ion per subunit.</text>
</comment>
<comment type="similarity">
    <text evidence="3">Belongs to the glycerophosphoryl diester phosphodiesterase family.</text>
</comment>
<comment type="sequence caution" evidence="3">
    <conflict type="erroneous initiation">
        <sequence resource="EMBL-CDS" id="AAK48317"/>
    </conflict>
    <text>Extended N-terminus.</text>
</comment>
<proteinExistence type="inferred from homology"/>
<gene>
    <name type="primary">glpQ1</name>
    <name type="ordered locus">MT3950</name>
</gene>
<protein>
    <recommendedName>
        <fullName>Probable glycerophosphodiester phosphodiesterase 1</fullName>
        <shortName>Glycerophosphoryl diester phosphodiesterase 1</shortName>
        <ecNumber evidence="1">3.1.4.46</ecNumber>
    </recommendedName>
</protein>
<sequence length="274" mass="29917">MTWADEVLAGHPFVVAHRGASAARPEHTLAAYDLALKEGADGVECDVRLTRDGHLVCVHDRRLDRTSTGAGLVSTMTLAQLRELEYGAWHDSWRPDGSHGDTSLLTLDALVSLVLDWHRPVKIFVETKHPVRYGSLVENKLLALLHRFGIAAPASADRSRAVVMSFSAAAVWRIRRAAPLLPTVLLGKTPRYLTSSAATAVGATAVGPSLPALKEYPQLVDRSAAQGRAVYCWNVDEYEDIDFCREVGVAWIGTHHPGRTKAWLEDGRANGTTR</sequence>
<feature type="chain" id="PRO_0000427242" description="Probable glycerophosphodiester phosphodiesterase 1">
    <location>
        <begin position="1"/>
        <end position="274"/>
    </location>
</feature>
<feature type="domain" description="GP-PDE">
    <location>
        <begin position="12"/>
        <end position="264"/>
    </location>
</feature>
<feature type="active site" description="Proton acceptor" evidence="2">
    <location>
        <position position="17"/>
    </location>
</feature>
<feature type="active site" description="Proton donor" evidence="2">
    <location>
        <position position="59"/>
    </location>
</feature>
<feature type="binding site" evidence="1">
    <location>
        <position position="44"/>
    </location>
    <ligand>
        <name>Ca(2+)</name>
        <dbReference type="ChEBI" id="CHEBI:29108"/>
    </ligand>
</feature>
<feature type="binding site" evidence="1">
    <location>
        <position position="46"/>
    </location>
    <ligand>
        <name>Ca(2+)</name>
        <dbReference type="ChEBI" id="CHEBI:29108"/>
    </ligand>
</feature>
<feature type="binding site" evidence="1">
    <location>
        <position position="126"/>
    </location>
    <ligand>
        <name>Ca(2+)</name>
        <dbReference type="ChEBI" id="CHEBI:29108"/>
    </ligand>
</feature>
<keyword id="KW-0106">Calcium</keyword>
<keyword id="KW-0319">Glycerol metabolism</keyword>
<keyword id="KW-0378">Hydrolase</keyword>
<keyword id="KW-0479">Metal-binding</keyword>
<keyword id="KW-1185">Reference proteome</keyword>
<name>GLPQ1_MYCTO</name>
<reference key="1">
    <citation type="journal article" date="2002" name="J. Bacteriol.">
        <title>Whole-genome comparison of Mycobacterium tuberculosis clinical and laboratory strains.</title>
        <authorList>
            <person name="Fleischmann R.D."/>
            <person name="Alland D."/>
            <person name="Eisen J.A."/>
            <person name="Carpenter L."/>
            <person name="White O."/>
            <person name="Peterson J.D."/>
            <person name="DeBoy R.T."/>
            <person name="Dodson R.J."/>
            <person name="Gwinn M.L."/>
            <person name="Haft D.H."/>
            <person name="Hickey E.K."/>
            <person name="Kolonay J.F."/>
            <person name="Nelson W.C."/>
            <person name="Umayam L.A."/>
            <person name="Ermolaeva M.D."/>
            <person name="Salzberg S.L."/>
            <person name="Delcher A."/>
            <person name="Utterback T.R."/>
            <person name="Weidman J.F."/>
            <person name="Khouri H.M."/>
            <person name="Gill J."/>
            <person name="Mikula A."/>
            <person name="Bishai W."/>
            <person name="Jacobs W.R. Jr."/>
            <person name="Venter J.C."/>
            <person name="Fraser C.M."/>
        </authorList>
    </citation>
    <scope>NUCLEOTIDE SEQUENCE [LARGE SCALE GENOMIC DNA]</scope>
    <source>
        <strain>CDC 1551 / Oshkosh</strain>
    </source>
</reference>
<evidence type="ECO:0000250" key="1">
    <source>
        <dbReference type="UniProtKB" id="P09394"/>
    </source>
</evidence>
<evidence type="ECO:0000250" key="2">
    <source>
        <dbReference type="UniProtKB" id="Q8RB32"/>
    </source>
</evidence>
<evidence type="ECO:0000305" key="3"/>
<dbReference type="EC" id="3.1.4.46" evidence="1"/>
<dbReference type="EMBL" id="AE000516">
    <property type="protein sequence ID" value="AAK48317.1"/>
    <property type="status" value="ALT_INIT"/>
    <property type="molecule type" value="Genomic_DNA"/>
</dbReference>
<dbReference type="PIR" id="G70653">
    <property type="entry name" value="G70653"/>
</dbReference>
<dbReference type="RefSeq" id="WP_003420924.1">
    <property type="nucleotide sequence ID" value="NZ_KK341227.1"/>
</dbReference>
<dbReference type="SMR" id="P9WMU2"/>
<dbReference type="KEGG" id="mtc:MT3950"/>
<dbReference type="PATRIC" id="fig|83331.31.peg.4248"/>
<dbReference type="HOGENOM" id="CLU_030006_3_0_11"/>
<dbReference type="Proteomes" id="UP000001020">
    <property type="component" value="Chromosome"/>
</dbReference>
<dbReference type="GO" id="GO:0008889">
    <property type="term" value="F:glycerophosphodiester phosphodiesterase activity"/>
    <property type="evidence" value="ECO:0007669"/>
    <property type="project" value="UniProtKB-EC"/>
</dbReference>
<dbReference type="GO" id="GO:0046872">
    <property type="term" value="F:metal ion binding"/>
    <property type="evidence" value="ECO:0007669"/>
    <property type="project" value="UniProtKB-KW"/>
</dbReference>
<dbReference type="GO" id="GO:0006071">
    <property type="term" value="P:glycerol metabolic process"/>
    <property type="evidence" value="ECO:0007669"/>
    <property type="project" value="UniProtKB-KW"/>
</dbReference>
<dbReference type="GO" id="GO:0006629">
    <property type="term" value="P:lipid metabolic process"/>
    <property type="evidence" value="ECO:0007669"/>
    <property type="project" value="InterPro"/>
</dbReference>
<dbReference type="CDD" id="cd08582">
    <property type="entry name" value="GDPD_like_2"/>
    <property type="match status" value="1"/>
</dbReference>
<dbReference type="Gene3D" id="3.20.20.190">
    <property type="entry name" value="Phosphatidylinositol (PI) phosphodiesterase"/>
    <property type="match status" value="1"/>
</dbReference>
<dbReference type="InterPro" id="IPR030395">
    <property type="entry name" value="GP_PDE_dom"/>
</dbReference>
<dbReference type="InterPro" id="IPR017946">
    <property type="entry name" value="PLC-like_Pdiesterase_TIM-brl"/>
</dbReference>
<dbReference type="PANTHER" id="PTHR46211:SF13">
    <property type="entry name" value="GLYCEROPHOSPHODIESTER PHOSPHODIESTERASE 1-RELATED"/>
    <property type="match status" value="1"/>
</dbReference>
<dbReference type="PANTHER" id="PTHR46211">
    <property type="entry name" value="GLYCEROPHOSPHORYL DIESTER PHOSPHODIESTERASE"/>
    <property type="match status" value="1"/>
</dbReference>
<dbReference type="Pfam" id="PF03009">
    <property type="entry name" value="GDPD"/>
    <property type="match status" value="1"/>
</dbReference>
<dbReference type="SUPFAM" id="SSF51695">
    <property type="entry name" value="PLC-like phosphodiesterases"/>
    <property type="match status" value="1"/>
</dbReference>
<dbReference type="PROSITE" id="PS51704">
    <property type="entry name" value="GP_PDE"/>
    <property type="match status" value="1"/>
</dbReference>
<accession>P9WMU2</accession>
<accession>L0TGR7</accession>
<accession>P96236</accession>
<accession>Q7D4R6</accession>